<evidence type="ECO:0000255" key="1">
    <source>
        <dbReference type="HAMAP-Rule" id="MF_01331"/>
    </source>
</evidence>
<evidence type="ECO:0000305" key="2"/>
<reference key="1">
    <citation type="submission" date="2006-12" db="EMBL/GenBank/DDBJ databases">
        <title>Complete sequence of Shewanella sp. W3-18-1.</title>
        <authorList>
            <consortium name="US DOE Joint Genome Institute"/>
            <person name="Copeland A."/>
            <person name="Lucas S."/>
            <person name="Lapidus A."/>
            <person name="Barry K."/>
            <person name="Detter J.C."/>
            <person name="Glavina del Rio T."/>
            <person name="Hammon N."/>
            <person name="Israni S."/>
            <person name="Dalin E."/>
            <person name="Tice H."/>
            <person name="Pitluck S."/>
            <person name="Chain P."/>
            <person name="Malfatti S."/>
            <person name="Shin M."/>
            <person name="Vergez L."/>
            <person name="Schmutz J."/>
            <person name="Larimer F."/>
            <person name="Land M."/>
            <person name="Hauser L."/>
            <person name="Kyrpides N."/>
            <person name="Lykidis A."/>
            <person name="Tiedje J."/>
            <person name="Richardson P."/>
        </authorList>
    </citation>
    <scope>NUCLEOTIDE SEQUENCE [LARGE SCALE GENOMIC DNA]</scope>
    <source>
        <strain>W3-18-1</strain>
    </source>
</reference>
<accession>A1REB9</accession>
<name>RL22_SHESW</name>
<dbReference type="EMBL" id="CP000503">
    <property type="protein sequence ID" value="ABM23014.1"/>
    <property type="molecule type" value="Genomic_DNA"/>
</dbReference>
<dbReference type="RefSeq" id="WP_006083595.1">
    <property type="nucleotide sequence ID" value="NC_008750.1"/>
</dbReference>
<dbReference type="SMR" id="A1REB9"/>
<dbReference type="GeneID" id="94726191"/>
<dbReference type="KEGG" id="shw:Sputw3181_0161"/>
<dbReference type="HOGENOM" id="CLU_083987_3_3_6"/>
<dbReference type="Proteomes" id="UP000002597">
    <property type="component" value="Chromosome"/>
</dbReference>
<dbReference type="GO" id="GO:0022625">
    <property type="term" value="C:cytosolic large ribosomal subunit"/>
    <property type="evidence" value="ECO:0007669"/>
    <property type="project" value="TreeGrafter"/>
</dbReference>
<dbReference type="GO" id="GO:0019843">
    <property type="term" value="F:rRNA binding"/>
    <property type="evidence" value="ECO:0007669"/>
    <property type="project" value="UniProtKB-UniRule"/>
</dbReference>
<dbReference type="GO" id="GO:0003735">
    <property type="term" value="F:structural constituent of ribosome"/>
    <property type="evidence" value="ECO:0007669"/>
    <property type="project" value="InterPro"/>
</dbReference>
<dbReference type="GO" id="GO:0006412">
    <property type="term" value="P:translation"/>
    <property type="evidence" value="ECO:0007669"/>
    <property type="project" value="UniProtKB-UniRule"/>
</dbReference>
<dbReference type="CDD" id="cd00336">
    <property type="entry name" value="Ribosomal_L22"/>
    <property type="match status" value="1"/>
</dbReference>
<dbReference type="FunFam" id="3.90.470.10:FF:000001">
    <property type="entry name" value="50S ribosomal protein L22"/>
    <property type="match status" value="1"/>
</dbReference>
<dbReference type="Gene3D" id="3.90.470.10">
    <property type="entry name" value="Ribosomal protein L22/L17"/>
    <property type="match status" value="1"/>
</dbReference>
<dbReference type="HAMAP" id="MF_01331_B">
    <property type="entry name" value="Ribosomal_uL22_B"/>
    <property type="match status" value="1"/>
</dbReference>
<dbReference type="InterPro" id="IPR001063">
    <property type="entry name" value="Ribosomal_uL22"/>
</dbReference>
<dbReference type="InterPro" id="IPR005727">
    <property type="entry name" value="Ribosomal_uL22_bac/chlpt-type"/>
</dbReference>
<dbReference type="InterPro" id="IPR047867">
    <property type="entry name" value="Ribosomal_uL22_bac/org-type"/>
</dbReference>
<dbReference type="InterPro" id="IPR018260">
    <property type="entry name" value="Ribosomal_uL22_CS"/>
</dbReference>
<dbReference type="InterPro" id="IPR036394">
    <property type="entry name" value="Ribosomal_uL22_sf"/>
</dbReference>
<dbReference type="NCBIfam" id="TIGR01044">
    <property type="entry name" value="rplV_bact"/>
    <property type="match status" value="1"/>
</dbReference>
<dbReference type="PANTHER" id="PTHR13501">
    <property type="entry name" value="CHLOROPLAST 50S RIBOSOMAL PROTEIN L22-RELATED"/>
    <property type="match status" value="1"/>
</dbReference>
<dbReference type="PANTHER" id="PTHR13501:SF8">
    <property type="entry name" value="LARGE RIBOSOMAL SUBUNIT PROTEIN UL22M"/>
    <property type="match status" value="1"/>
</dbReference>
<dbReference type="Pfam" id="PF00237">
    <property type="entry name" value="Ribosomal_L22"/>
    <property type="match status" value="1"/>
</dbReference>
<dbReference type="SUPFAM" id="SSF54843">
    <property type="entry name" value="Ribosomal protein L22"/>
    <property type="match status" value="1"/>
</dbReference>
<dbReference type="PROSITE" id="PS00464">
    <property type="entry name" value="RIBOSOMAL_L22"/>
    <property type="match status" value="1"/>
</dbReference>
<feature type="chain" id="PRO_1000052652" description="Large ribosomal subunit protein uL22">
    <location>
        <begin position="1"/>
        <end position="110"/>
    </location>
</feature>
<proteinExistence type="inferred from homology"/>
<gene>
    <name evidence="1" type="primary">rplV</name>
    <name type="ordered locus">Sputw3181_0161</name>
</gene>
<sequence>MEVLAKHRFARTSAQKARLVADQIRGLPVAKALEILTFSPKKAAVLVKKVLDSAIANAEHNEGADIDELKVGAVFVDEGPTMKRIMPRAKGRADRIMKRTSHITVVVSDR</sequence>
<protein>
    <recommendedName>
        <fullName evidence="1">Large ribosomal subunit protein uL22</fullName>
    </recommendedName>
    <alternativeName>
        <fullName evidence="2">50S ribosomal protein L22</fullName>
    </alternativeName>
</protein>
<comment type="function">
    <text evidence="1">This protein binds specifically to 23S rRNA; its binding is stimulated by other ribosomal proteins, e.g. L4, L17, and L20. It is important during the early stages of 50S assembly. It makes multiple contacts with different domains of the 23S rRNA in the assembled 50S subunit and ribosome (By similarity).</text>
</comment>
<comment type="function">
    <text evidence="1">The globular domain of the protein is located near the polypeptide exit tunnel on the outside of the subunit, while an extended beta-hairpin is found that lines the wall of the exit tunnel in the center of the 70S ribosome.</text>
</comment>
<comment type="subunit">
    <text evidence="1">Part of the 50S ribosomal subunit.</text>
</comment>
<comment type="similarity">
    <text evidence="1">Belongs to the universal ribosomal protein uL22 family.</text>
</comment>
<organism>
    <name type="scientific">Shewanella sp. (strain W3-18-1)</name>
    <dbReference type="NCBI Taxonomy" id="351745"/>
    <lineage>
        <taxon>Bacteria</taxon>
        <taxon>Pseudomonadati</taxon>
        <taxon>Pseudomonadota</taxon>
        <taxon>Gammaproteobacteria</taxon>
        <taxon>Alteromonadales</taxon>
        <taxon>Shewanellaceae</taxon>
        <taxon>Shewanella</taxon>
    </lineage>
</organism>
<keyword id="KW-0687">Ribonucleoprotein</keyword>
<keyword id="KW-0689">Ribosomal protein</keyword>
<keyword id="KW-0694">RNA-binding</keyword>
<keyword id="KW-0699">rRNA-binding</keyword>